<gene>
    <name type="primary">yfdR</name>
    <name type="ordered locus">b2361</name>
    <name type="ordered locus">JW2358</name>
</gene>
<sequence>MSFIKTFSGKHFYYDKINKDDIVINDIAVSLSNICRFAGHLSHFYSVAQHAVLCSQLVPQEFAFEALMHDATEAYCQDIPAPLKRLLPDYKRMEEKIDAVIREKYGLPPVMSTPVKYADLIMLATERRDLGLDDGSFWPVLEGIPATEMFNVIPLAPGHAYGMFMERFNDLSELRKCA</sequence>
<proteinExistence type="predicted"/>
<accession>P76514</accession>
<accession>Q2MAK6</accession>
<dbReference type="EMBL" id="U00096">
    <property type="protein sequence ID" value="AAC75420.2"/>
    <property type="molecule type" value="Genomic_DNA"/>
</dbReference>
<dbReference type="EMBL" id="AP009048">
    <property type="protein sequence ID" value="BAE76700.1"/>
    <property type="molecule type" value="Genomic_DNA"/>
</dbReference>
<dbReference type="PIR" id="F65009">
    <property type="entry name" value="F65009"/>
</dbReference>
<dbReference type="RefSeq" id="NP_416862.2">
    <property type="nucleotide sequence ID" value="NC_000913.3"/>
</dbReference>
<dbReference type="RefSeq" id="WP_000008183.1">
    <property type="nucleotide sequence ID" value="NZ_LN832404.1"/>
</dbReference>
<dbReference type="SMR" id="P76514"/>
<dbReference type="BioGRID" id="4260549">
    <property type="interactions" value="14"/>
</dbReference>
<dbReference type="BioGRID" id="851175">
    <property type="interactions" value="1"/>
</dbReference>
<dbReference type="FunCoup" id="P76514">
    <property type="interactions" value="214"/>
</dbReference>
<dbReference type="IntAct" id="P76514">
    <property type="interactions" value="4"/>
</dbReference>
<dbReference type="STRING" id="511145.b2361"/>
<dbReference type="PaxDb" id="511145-b2361"/>
<dbReference type="EnsemblBacteria" id="AAC75420">
    <property type="protein sequence ID" value="AAC75420"/>
    <property type="gene ID" value="b2361"/>
</dbReference>
<dbReference type="GeneID" id="946834"/>
<dbReference type="KEGG" id="ecj:JW2358"/>
<dbReference type="KEGG" id="eco:b2361"/>
<dbReference type="KEGG" id="ecoc:C3026_13130"/>
<dbReference type="PATRIC" id="fig|511145.12.peg.2458"/>
<dbReference type="EchoBASE" id="EB3892"/>
<dbReference type="eggNOG" id="COG1896">
    <property type="taxonomic scope" value="Bacteria"/>
</dbReference>
<dbReference type="HOGENOM" id="CLU_089999_3_1_6"/>
<dbReference type="InParanoid" id="P76514"/>
<dbReference type="OMA" id="VMLATER"/>
<dbReference type="OrthoDB" id="1099791at2"/>
<dbReference type="PhylomeDB" id="P76514"/>
<dbReference type="BioCyc" id="EcoCyc:G7230-MONOMER"/>
<dbReference type="BioCyc" id="MetaCyc:G7230-MONOMER"/>
<dbReference type="PRO" id="PR:P76514"/>
<dbReference type="Proteomes" id="UP000000625">
    <property type="component" value="Chromosome"/>
</dbReference>
<dbReference type="GO" id="GO:0002953">
    <property type="term" value="F:5'-deoxynucleotidase activity"/>
    <property type="evidence" value="ECO:0000314"/>
    <property type="project" value="EcoCyc"/>
</dbReference>
<dbReference type="GO" id="GO:0050897">
    <property type="term" value="F:cobalt ion binding"/>
    <property type="evidence" value="ECO:0000314"/>
    <property type="project" value="EcoCyc"/>
</dbReference>
<dbReference type="FunFam" id="1.10.3210.10:FF:000023">
    <property type="entry name" value="HD family hydrolase"/>
    <property type="match status" value="1"/>
</dbReference>
<dbReference type="Gene3D" id="1.10.3210.10">
    <property type="entry name" value="Hypothetical protein af1432"/>
    <property type="match status" value="1"/>
</dbReference>
<dbReference type="SUPFAM" id="SSF109604">
    <property type="entry name" value="HD-domain/PDEase-like"/>
    <property type="match status" value="1"/>
</dbReference>
<protein>
    <recommendedName>
        <fullName>Uncharacterized protein YfdR</fullName>
    </recommendedName>
</protein>
<reference key="1">
    <citation type="journal article" date="1997" name="Science">
        <title>The complete genome sequence of Escherichia coli K-12.</title>
        <authorList>
            <person name="Blattner F.R."/>
            <person name="Plunkett G. III"/>
            <person name="Bloch C.A."/>
            <person name="Perna N.T."/>
            <person name="Burland V."/>
            <person name="Riley M."/>
            <person name="Collado-Vides J."/>
            <person name="Glasner J.D."/>
            <person name="Rode C.K."/>
            <person name="Mayhew G.F."/>
            <person name="Gregor J."/>
            <person name="Davis N.W."/>
            <person name="Kirkpatrick H.A."/>
            <person name="Goeden M.A."/>
            <person name="Rose D.J."/>
            <person name="Mau B."/>
            <person name="Shao Y."/>
        </authorList>
    </citation>
    <scope>NUCLEOTIDE SEQUENCE [LARGE SCALE GENOMIC DNA]</scope>
    <source>
        <strain>K12 / MG1655 / ATCC 47076</strain>
    </source>
</reference>
<reference key="2">
    <citation type="journal article" date="2006" name="Mol. Syst. Biol.">
        <title>Highly accurate genome sequences of Escherichia coli K-12 strains MG1655 and W3110.</title>
        <authorList>
            <person name="Hayashi K."/>
            <person name="Morooka N."/>
            <person name="Yamamoto Y."/>
            <person name="Fujita K."/>
            <person name="Isono K."/>
            <person name="Choi S."/>
            <person name="Ohtsubo E."/>
            <person name="Baba T."/>
            <person name="Wanner B.L."/>
            <person name="Mori H."/>
            <person name="Horiuchi T."/>
        </authorList>
    </citation>
    <scope>NUCLEOTIDE SEQUENCE [LARGE SCALE GENOMIC DNA]</scope>
    <source>
        <strain>K12 / W3110 / ATCC 27325 / DSM 5911</strain>
    </source>
</reference>
<name>YFDR_ECOLI</name>
<organism>
    <name type="scientific">Escherichia coli (strain K12)</name>
    <dbReference type="NCBI Taxonomy" id="83333"/>
    <lineage>
        <taxon>Bacteria</taxon>
        <taxon>Pseudomonadati</taxon>
        <taxon>Pseudomonadota</taxon>
        <taxon>Gammaproteobacteria</taxon>
        <taxon>Enterobacterales</taxon>
        <taxon>Enterobacteriaceae</taxon>
        <taxon>Escherichia</taxon>
    </lineage>
</organism>
<keyword id="KW-1185">Reference proteome</keyword>
<feature type="chain" id="PRO_0000169211" description="Uncharacterized protein YfdR">
    <location>
        <begin position="1"/>
        <end position="178"/>
    </location>
</feature>